<comment type="function">
    <text evidence="1">Stationary phase-essential protein not required for growth on nonfermentable carbon sources.</text>
</comment>
<comment type="similarity">
    <text evidence="3">Belongs to the SPG4 family.</text>
</comment>
<accession>B3LLZ8</accession>
<feature type="chain" id="PRO_0000405005" description="Stationary phase protein 4">
    <location>
        <begin position="1"/>
        <end position="115"/>
    </location>
</feature>
<feature type="region of interest" description="Disordered" evidence="2">
    <location>
        <begin position="16"/>
        <end position="77"/>
    </location>
</feature>
<feature type="compositionally biased region" description="Polar residues" evidence="2">
    <location>
        <begin position="25"/>
        <end position="37"/>
    </location>
</feature>
<feature type="compositionally biased region" description="Polar residues" evidence="2">
    <location>
        <begin position="50"/>
        <end position="66"/>
    </location>
</feature>
<name>SPG4_YEAS1</name>
<protein>
    <recommendedName>
        <fullName>Stationary phase protein 4</fullName>
    </recommendedName>
</protein>
<organism>
    <name type="scientific">Saccharomyces cerevisiae (strain RM11-1a)</name>
    <name type="common">Baker's yeast</name>
    <dbReference type="NCBI Taxonomy" id="285006"/>
    <lineage>
        <taxon>Eukaryota</taxon>
        <taxon>Fungi</taxon>
        <taxon>Dikarya</taxon>
        <taxon>Ascomycota</taxon>
        <taxon>Saccharomycotina</taxon>
        <taxon>Saccharomycetes</taxon>
        <taxon>Saccharomycetales</taxon>
        <taxon>Saccharomycetaceae</taxon>
        <taxon>Saccharomyces</taxon>
    </lineage>
</organism>
<gene>
    <name type="primary">SPG4</name>
    <name type="ORF">SCRG_01997</name>
</gene>
<sequence length="115" mass="13180">MGSFWDAFAVYDKKKHADPSVYGGNHNNTGDSKTQVMFSKEYRQPRTHQQENLQSMRRSSIGSQDSSDVEDVKEGRLPAEVEIPKNVDISNMSQGEFLRLYESLRRGEPDNKVNR</sequence>
<reference key="1">
    <citation type="submission" date="2005-03" db="EMBL/GenBank/DDBJ databases">
        <title>Annotation of the Saccharomyces cerevisiae RM11-1a genome.</title>
        <authorList>
            <consortium name="The Broad Institute Genome Sequencing Platform"/>
            <person name="Birren B.W."/>
            <person name="Lander E.S."/>
            <person name="Galagan J.E."/>
            <person name="Nusbaum C."/>
            <person name="Devon K."/>
            <person name="Cuomo C."/>
            <person name="Jaffe D.B."/>
            <person name="Butler J."/>
            <person name="Alvarez P."/>
            <person name="Gnerre S."/>
            <person name="Grabherr M."/>
            <person name="Kleber M."/>
            <person name="Mauceli E.W."/>
            <person name="Brockman W."/>
            <person name="MacCallum I.A."/>
            <person name="Rounsley S."/>
            <person name="Young S.K."/>
            <person name="LaButti K."/>
            <person name="Pushparaj V."/>
            <person name="DeCaprio D."/>
            <person name="Crawford M."/>
            <person name="Koehrsen M."/>
            <person name="Engels R."/>
            <person name="Montgomery P."/>
            <person name="Pearson M."/>
            <person name="Howarth C."/>
            <person name="Larson L."/>
            <person name="Luoma S."/>
            <person name="White J."/>
            <person name="O'Leary S."/>
            <person name="Kodira C.D."/>
            <person name="Zeng Q."/>
            <person name="Yandava C."/>
            <person name="Alvarado L."/>
            <person name="Pratt S."/>
            <person name="Kruglyak L."/>
        </authorList>
    </citation>
    <scope>NUCLEOTIDE SEQUENCE [LARGE SCALE GENOMIC DNA]</scope>
    <source>
        <strain>RM11-1a</strain>
    </source>
</reference>
<dbReference type="EMBL" id="CH408047">
    <property type="protein sequence ID" value="EDV11601.1"/>
    <property type="molecule type" value="Genomic_DNA"/>
</dbReference>
<dbReference type="SMR" id="B3LLZ8"/>
<dbReference type="HOGENOM" id="CLU_2158879_0_0_1"/>
<dbReference type="OrthoDB" id="39678at4893"/>
<dbReference type="Proteomes" id="UP000008335">
    <property type="component" value="Unassembled WGS sequence"/>
</dbReference>
<dbReference type="InterPro" id="IPR020485">
    <property type="entry name" value="Spg4"/>
</dbReference>
<dbReference type="Pfam" id="PF17325">
    <property type="entry name" value="SPG4"/>
    <property type="match status" value="1"/>
</dbReference>
<proteinExistence type="inferred from homology"/>
<evidence type="ECO:0000250" key="1"/>
<evidence type="ECO:0000256" key="2">
    <source>
        <dbReference type="SAM" id="MobiDB-lite"/>
    </source>
</evidence>
<evidence type="ECO:0000305" key="3"/>